<evidence type="ECO:0000250" key="1">
    <source>
        <dbReference type="UniProtKB" id="Q2VPQ9"/>
    </source>
</evidence>
<evidence type="ECO:0000255" key="2"/>
<evidence type="ECO:0000256" key="3">
    <source>
        <dbReference type="SAM" id="MobiDB-lite"/>
    </source>
</evidence>
<evidence type="ECO:0000269" key="4">
    <source>
    </source>
</evidence>
<evidence type="ECO:0000269" key="5">
    <source>
    </source>
</evidence>
<evidence type="ECO:0000269" key="6">
    <source>
    </source>
</evidence>
<evidence type="ECO:0000269" key="7">
    <source>
    </source>
</evidence>
<evidence type="ECO:0000269" key="8">
    <source>
    </source>
</evidence>
<evidence type="ECO:0000269" key="9">
    <source>
    </source>
</evidence>
<evidence type="ECO:0000269" key="10">
    <source>
    </source>
</evidence>
<evidence type="ECO:0000269" key="11">
    <source>
    </source>
</evidence>
<evidence type="ECO:0000303" key="12">
    <source>
    </source>
</evidence>
<evidence type="ECO:0000303" key="13">
    <source ref="3"/>
</evidence>
<evidence type="ECO:0000305" key="14"/>
<evidence type="ECO:0000312" key="15">
    <source>
        <dbReference type="HGNC" id="HGNC:25674"/>
    </source>
</evidence>
<evidence type="ECO:0007744" key="16">
    <source>
    </source>
</evidence>
<evidence type="ECO:0007744" key="17">
    <source>
    </source>
</evidence>
<evidence type="ECO:0007744" key="18">
    <source>
    </source>
</evidence>
<evidence type="ECO:0007744" key="19">
    <source>
    </source>
</evidence>
<evidence type="ECO:0007744" key="20">
    <source>
    </source>
</evidence>
<evidence type="ECO:0007744" key="21">
    <source>
    </source>
</evidence>
<organism>
    <name type="scientific">Homo sapiens</name>
    <name type="common">Human</name>
    <dbReference type="NCBI Taxonomy" id="9606"/>
    <lineage>
        <taxon>Eukaryota</taxon>
        <taxon>Metazoa</taxon>
        <taxon>Chordata</taxon>
        <taxon>Craniata</taxon>
        <taxon>Vertebrata</taxon>
        <taxon>Euteleostomi</taxon>
        <taxon>Mammalia</taxon>
        <taxon>Eutheria</taxon>
        <taxon>Euarchontoglires</taxon>
        <taxon>Primates</taxon>
        <taxon>Haplorrhini</taxon>
        <taxon>Catarrhini</taxon>
        <taxon>Hominidae</taxon>
        <taxon>Homo</taxon>
    </lineage>
</organism>
<name>EAF6_HUMAN</name>
<sequence length="191" mass="21635">MAMHNKAAPPQIPDTRRELAELVKRKQELAETLANLERQIYAFEGSYLEDTQMYGNIIRGWDRYLTNQKNSNSKNDRRNRKFKEAERLFSKSSVTSAAAVSALAGVQDQLIEKREPGSGTESDTSPDFHNQENEPSQEDPEDLDGSVQGVKPQKAASSTSSGSHHSSHKKRKNKNRHRIDLKLNKKPRADY</sequence>
<protein>
    <recommendedName>
        <fullName>Chromatin modification-related protein MEAF6</fullName>
        <shortName>MYST/Esa1-associated factor 6</shortName>
    </recommendedName>
    <alternativeName>
        <fullName>Esa1-associated factor 6 homolog</fullName>
        <shortName>Protein EAF6 homolog</shortName>
        <shortName>hEAF6</shortName>
    </alternativeName>
    <alternativeName>
        <fullName>Sarcoma antigen NY-SAR-91</fullName>
    </alternativeName>
</protein>
<accession>Q9HAF1</accession>
<accession>B1AK64</accession>
<accession>Q4F967</accession>
<accession>Q7Z311</accession>
<accession>Q86WE3</accession>
<gene>
    <name evidence="15" type="primary">MEAF6</name>
    <name type="synonym">C1orf149</name>
    <name type="synonym">CENP-28</name>
    <name type="synonym">EAF6</name>
</gene>
<dbReference type="EMBL" id="BX538212">
    <property type="protein sequence ID" value="CAD98071.1"/>
    <property type="molecule type" value="mRNA"/>
</dbReference>
<dbReference type="EMBL" id="BX640719">
    <property type="protein sequence ID" value="CAE45838.1"/>
    <property type="molecule type" value="mRNA"/>
</dbReference>
<dbReference type="EMBL" id="AK021792">
    <property type="protein sequence ID" value="BAB13898.1"/>
    <property type="molecule type" value="mRNA"/>
</dbReference>
<dbReference type="EMBL" id="DQ099384">
    <property type="protein sequence ID" value="AAZ13760.1"/>
    <property type="molecule type" value="mRNA"/>
</dbReference>
<dbReference type="EMBL" id="AL034379">
    <property type="status" value="NOT_ANNOTATED_CDS"/>
    <property type="molecule type" value="Genomic_DNA"/>
</dbReference>
<dbReference type="EMBL" id="BC056406">
    <property type="protein sequence ID" value="AAH56406.1"/>
    <property type="molecule type" value="mRNA"/>
</dbReference>
<dbReference type="EMBL" id="BC016328">
    <property type="protein sequence ID" value="AAH16328.1"/>
    <property type="molecule type" value="mRNA"/>
</dbReference>
<dbReference type="EMBL" id="AY211926">
    <property type="protein sequence ID" value="AAO65179.1"/>
    <property type="molecule type" value="mRNA"/>
</dbReference>
<dbReference type="CCDS" id="CCDS418.1">
    <molecule id="Q9HAF1-3"/>
</dbReference>
<dbReference type="CCDS" id="CCDS59195.1">
    <molecule id="Q9HAF1-4"/>
</dbReference>
<dbReference type="CCDS" id="CCDS59196.1">
    <molecule id="Q9HAF1-1"/>
</dbReference>
<dbReference type="RefSeq" id="NP_001257804.1">
    <molecule id="Q9HAF1-1"/>
    <property type="nucleotide sequence ID" value="NM_001270875.3"/>
</dbReference>
<dbReference type="RefSeq" id="NP_001257805.1">
    <molecule id="Q9HAF1-4"/>
    <property type="nucleotide sequence ID" value="NM_001270876.3"/>
</dbReference>
<dbReference type="RefSeq" id="NP_073593.2">
    <molecule id="Q9HAF1-3"/>
    <property type="nucleotide sequence ID" value="NM_022756.5"/>
</dbReference>
<dbReference type="RefSeq" id="XP_047283998.1">
    <molecule id="Q9HAF1-2"/>
    <property type="nucleotide sequence ID" value="XM_047428042.1"/>
</dbReference>
<dbReference type="RefSeq" id="XP_054194274.1">
    <molecule id="Q9HAF1-2"/>
    <property type="nucleotide sequence ID" value="XM_054338299.1"/>
</dbReference>
<dbReference type="SMR" id="Q9HAF1"/>
<dbReference type="BioGRID" id="122280">
    <property type="interactions" value="101"/>
</dbReference>
<dbReference type="ComplexPortal" id="CPX-718">
    <property type="entry name" value="HBO1-4.1 histone acetyltransferase complex"/>
</dbReference>
<dbReference type="ComplexPortal" id="CPX-719">
    <property type="entry name" value="HBO1-4.2 histone acetyltransferase complex"/>
</dbReference>
<dbReference type="ComplexPortal" id="CPX-720">
    <property type="entry name" value="HBO1-4.3 histone acetyltransferase complex"/>
</dbReference>
<dbReference type="ComplexPortal" id="CPX-721">
    <property type="entry name" value="HBO1-5.1 histone acetyltransferase complex"/>
</dbReference>
<dbReference type="ComplexPortal" id="CPX-722">
    <property type="entry name" value="HBO1-5.2 histone acetyltransferase complex"/>
</dbReference>
<dbReference type="ComplexPortal" id="CPX-723">
    <property type="entry name" value="HBO1-5.3 histone acetyltransferase complex"/>
</dbReference>
<dbReference type="ComplexPortal" id="CPX-727">
    <property type="entry name" value="MOZ1 histone acetyltransferase complex"/>
</dbReference>
<dbReference type="ComplexPortal" id="CPX-733">
    <property type="entry name" value="MOZ2 histone acetyltransferase complex"/>
</dbReference>
<dbReference type="ComplexPortal" id="CPX-736">
    <property type="entry name" value="MOZ3 histone acetyltransferase complex"/>
</dbReference>
<dbReference type="ComplexPortal" id="CPX-738">
    <property type="entry name" value="MORF1 histone acetyltransferase complex"/>
</dbReference>
<dbReference type="ComplexPortal" id="CPX-739">
    <property type="entry name" value="MORF2 histone acetyltransferase complex"/>
</dbReference>
<dbReference type="ComplexPortal" id="CPX-740">
    <property type="entry name" value="MORF3 histone acetyltransferase complex"/>
</dbReference>
<dbReference type="ComplexPortal" id="CPX-978">
    <property type="entry name" value="NuA4 histone acetyltransferase complex"/>
</dbReference>
<dbReference type="CORUM" id="Q9HAF1"/>
<dbReference type="FunCoup" id="Q9HAF1">
    <property type="interactions" value="1713"/>
</dbReference>
<dbReference type="IntAct" id="Q9HAF1">
    <property type="interactions" value="83"/>
</dbReference>
<dbReference type="MINT" id="Q9HAF1"/>
<dbReference type="STRING" id="9606.ENSP00000362166"/>
<dbReference type="GlyGen" id="Q9HAF1">
    <property type="glycosylation" value="1 site, 1 O-linked glycan (1 site)"/>
</dbReference>
<dbReference type="iPTMnet" id="Q9HAF1"/>
<dbReference type="PhosphoSitePlus" id="Q9HAF1"/>
<dbReference type="BioMuta" id="MEAF6"/>
<dbReference type="DMDM" id="74752760"/>
<dbReference type="jPOST" id="Q9HAF1"/>
<dbReference type="MassIVE" id="Q9HAF1"/>
<dbReference type="PeptideAtlas" id="Q9HAF1"/>
<dbReference type="ProteomicsDB" id="3023"/>
<dbReference type="ProteomicsDB" id="81400">
    <molecule id="Q9HAF1-1"/>
</dbReference>
<dbReference type="ProteomicsDB" id="81401">
    <molecule id="Q9HAF1-2"/>
</dbReference>
<dbReference type="ProteomicsDB" id="81402">
    <molecule id="Q9HAF1-3"/>
</dbReference>
<dbReference type="Pumba" id="Q9HAF1"/>
<dbReference type="Antibodypedia" id="31724">
    <property type="antibodies" value="113 antibodies from 20 providers"/>
</dbReference>
<dbReference type="DNASU" id="64769"/>
<dbReference type="Ensembl" id="ENST00000296214.10">
    <molecule id="Q9HAF1-1"/>
    <property type="protein sequence ID" value="ENSP00000296214.5"/>
    <property type="gene ID" value="ENSG00000163875.16"/>
</dbReference>
<dbReference type="Ensembl" id="ENST00000373073.8">
    <molecule id="Q9HAF1-4"/>
    <property type="protein sequence ID" value="ENSP00000362164.4"/>
    <property type="gene ID" value="ENSG00000163875.16"/>
</dbReference>
<dbReference type="Ensembl" id="ENST00000373075.6">
    <molecule id="Q9HAF1-3"/>
    <property type="protein sequence ID" value="ENSP00000362166.2"/>
    <property type="gene ID" value="ENSG00000163875.16"/>
</dbReference>
<dbReference type="Ensembl" id="ENST00000448519.2">
    <molecule id="Q9HAF1-2"/>
    <property type="protein sequence ID" value="ENSP00000394966.2"/>
    <property type="gene ID" value="ENSG00000163875.16"/>
</dbReference>
<dbReference type="GeneID" id="64769"/>
<dbReference type="KEGG" id="hsa:64769"/>
<dbReference type="MANE-Select" id="ENST00000296214.10">
    <property type="protein sequence ID" value="ENSP00000296214.5"/>
    <property type="RefSeq nucleotide sequence ID" value="NM_001270875.3"/>
    <property type="RefSeq protein sequence ID" value="NP_001257804.1"/>
</dbReference>
<dbReference type="UCSC" id="uc001cbe.4">
    <molecule id="Q9HAF1-1"/>
    <property type="organism name" value="human"/>
</dbReference>
<dbReference type="AGR" id="HGNC:25674"/>
<dbReference type="CTD" id="64769"/>
<dbReference type="DisGeNET" id="64769"/>
<dbReference type="GeneCards" id="MEAF6"/>
<dbReference type="HGNC" id="HGNC:25674">
    <property type="gene designation" value="MEAF6"/>
</dbReference>
<dbReference type="HPA" id="ENSG00000163875">
    <property type="expression patterns" value="Low tissue specificity"/>
</dbReference>
<dbReference type="MalaCards" id="MEAF6"/>
<dbReference type="MIM" id="611001">
    <property type="type" value="gene"/>
</dbReference>
<dbReference type="neXtProt" id="NX_Q9HAF1"/>
<dbReference type="OpenTargets" id="ENSG00000163875"/>
<dbReference type="PharmGKB" id="PA165751536"/>
<dbReference type="VEuPathDB" id="HostDB:ENSG00000163875"/>
<dbReference type="eggNOG" id="KOG3856">
    <property type="taxonomic scope" value="Eukaryota"/>
</dbReference>
<dbReference type="GeneTree" id="ENSGT00390000015257"/>
<dbReference type="HOGENOM" id="CLU_092163_1_0_1"/>
<dbReference type="InParanoid" id="Q9HAF1"/>
<dbReference type="OMA" id="LICRLEW"/>
<dbReference type="OrthoDB" id="440324at2759"/>
<dbReference type="PAN-GO" id="Q9HAF1">
    <property type="GO annotations" value="1 GO annotation based on evolutionary models"/>
</dbReference>
<dbReference type="PhylomeDB" id="Q9HAF1"/>
<dbReference type="TreeFam" id="TF324130"/>
<dbReference type="PathwayCommons" id="Q9HAF1"/>
<dbReference type="Reactome" id="R-HSA-3214847">
    <property type="pathway name" value="HATs acetylate histones"/>
</dbReference>
<dbReference type="Reactome" id="R-HSA-6804758">
    <property type="pathway name" value="Regulation of TP53 Activity through Acetylation"/>
</dbReference>
<dbReference type="SignaLink" id="Q9HAF1"/>
<dbReference type="SIGNOR" id="Q9HAF1"/>
<dbReference type="BioGRID-ORCS" id="64769">
    <property type="hits" value="178 hits in 1167 CRISPR screens"/>
</dbReference>
<dbReference type="CD-CODE" id="91857CE7">
    <property type="entry name" value="Nucleolus"/>
</dbReference>
<dbReference type="ChiTaRS" id="MEAF6">
    <property type="organism name" value="human"/>
</dbReference>
<dbReference type="GeneWiki" id="C1orf149"/>
<dbReference type="GenomeRNAi" id="64769"/>
<dbReference type="Pharos" id="Q9HAF1">
    <property type="development level" value="Tbio"/>
</dbReference>
<dbReference type="PRO" id="PR:Q9HAF1"/>
<dbReference type="Proteomes" id="UP000005640">
    <property type="component" value="Chromosome 1"/>
</dbReference>
<dbReference type="RNAct" id="Q9HAF1">
    <property type="molecule type" value="protein"/>
</dbReference>
<dbReference type="Bgee" id="ENSG00000163875">
    <property type="expression patterns" value="Expressed in cortical plate and 205 other cell types or tissues"/>
</dbReference>
<dbReference type="ExpressionAtlas" id="Q9HAF1">
    <property type="expression patterns" value="baseline and differential"/>
</dbReference>
<dbReference type="GO" id="GO:0000123">
    <property type="term" value="C:histone acetyltransferase complex"/>
    <property type="evidence" value="ECO:0000314"/>
    <property type="project" value="ComplexPortal"/>
</dbReference>
<dbReference type="GO" id="GO:0000776">
    <property type="term" value="C:kinetochore"/>
    <property type="evidence" value="ECO:0000314"/>
    <property type="project" value="UniProtKB"/>
</dbReference>
<dbReference type="GO" id="GO:0070776">
    <property type="term" value="C:MOZ/MORF histone acetyltransferase complex"/>
    <property type="evidence" value="ECO:0000314"/>
    <property type="project" value="UniProtKB"/>
</dbReference>
<dbReference type="GO" id="GO:0035267">
    <property type="term" value="C:NuA4 histone acetyltransferase complex"/>
    <property type="evidence" value="ECO:0000314"/>
    <property type="project" value="UniProtKB"/>
</dbReference>
<dbReference type="GO" id="GO:0005730">
    <property type="term" value="C:nucleolus"/>
    <property type="evidence" value="ECO:0000314"/>
    <property type="project" value="UniProtKB"/>
</dbReference>
<dbReference type="GO" id="GO:0005654">
    <property type="term" value="C:nucleoplasm"/>
    <property type="evidence" value="ECO:0000314"/>
    <property type="project" value="ComplexPortal"/>
</dbReference>
<dbReference type="GO" id="GO:0000786">
    <property type="term" value="C:nucleosome"/>
    <property type="evidence" value="ECO:0000314"/>
    <property type="project" value="ComplexPortal"/>
</dbReference>
<dbReference type="GO" id="GO:0005634">
    <property type="term" value="C:nucleus"/>
    <property type="evidence" value="ECO:0000314"/>
    <property type="project" value="ComplexPortal"/>
</dbReference>
<dbReference type="GO" id="GO:0006338">
    <property type="term" value="P:chromatin remodeling"/>
    <property type="evidence" value="ECO:0007669"/>
    <property type="project" value="GOC"/>
</dbReference>
<dbReference type="GO" id="GO:0045893">
    <property type="term" value="P:positive regulation of DNA-templated transcription"/>
    <property type="evidence" value="ECO:0000303"/>
    <property type="project" value="ComplexPortal"/>
</dbReference>
<dbReference type="GO" id="GO:1905168">
    <property type="term" value="P:positive regulation of double-strand break repair via homologous recombination"/>
    <property type="evidence" value="ECO:0000314"/>
    <property type="project" value="ComplexPortal"/>
</dbReference>
<dbReference type="GO" id="GO:0042981">
    <property type="term" value="P:regulation of apoptotic process"/>
    <property type="evidence" value="ECO:0000303"/>
    <property type="project" value="ComplexPortal"/>
</dbReference>
<dbReference type="GO" id="GO:0051726">
    <property type="term" value="P:regulation of cell cycle"/>
    <property type="evidence" value="ECO:0000314"/>
    <property type="project" value="ComplexPortal"/>
</dbReference>
<dbReference type="GO" id="GO:0001558">
    <property type="term" value="P:regulation of cell growth"/>
    <property type="evidence" value="ECO:0000314"/>
    <property type="project" value="ComplexPortal"/>
</dbReference>
<dbReference type="GO" id="GO:0050793">
    <property type="term" value="P:regulation of developmental process"/>
    <property type="evidence" value="ECO:0000303"/>
    <property type="project" value="ComplexPortal"/>
</dbReference>
<dbReference type="GO" id="GO:2000278">
    <property type="term" value="P:regulation of DNA biosynthetic process"/>
    <property type="evidence" value="ECO:0000314"/>
    <property type="project" value="ComplexPortal"/>
</dbReference>
<dbReference type="GO" id="GO:0006275">
    <property type="term" value="P:regulation of DNA replication"/>
    <property type="evidence" value="ECO:0000314"/>
    <property type="project" value="ComplexPortal"/>
</dbReference>
<dbReference type="GO" id="GO:0006355">
    <property type="term" value="P:regulation of DNA-templated transcription"/>
    <property type="evidence" value="ECO:0000314"/>
    <property type="project" value="ComplexPortal"/>
</dbReference>
<dbReference type="GO" id="GO:2000779">
    <property type="term" value="P:regulation of double-strand break repair"/>
    <property type="evidence" value="ECO:0000303"/>
    <property type="project" value="ComplexPortal"/>
</dbReference>
<dbReference type="GO" id="GO:1903706">
    <property type="term" value="P:regulation of hemopoiesis"/>
    <property type="evidence" value="ECO:0000303"/>
    <property type="project" value="ComplexPortal"/>
</dbReference>
<dbReference type="InterPro" id="IPR015418">
    <property type="entry name" value="Eaf6"/>
</dbReference>
<dbReference type="PANTHER" id="PTHR13476">
    <property type="entry name" value="CHROMATIN MODIFICATION-RELATED PROTEIN MEAF6"/>
    <property type="match status" value="1"/>
</dbReference>
<dbReference type="Pfam" id="PF09340">
    <property type="entry name" value="NuA4"/>
    <property type="match status" value="1"/>
</dbReference>
<proteinExistence type="evidence at protein level"/>
<feature type="initiator methionine" description="Removed" evidence="1">
    <location>
        <position position="1"/>
    </location>
</feature>
<feature type="chain" id="PRO_0000272609" description="Chromatin modification-related protein MEAF6">
    <location>
        <begin position="2"/>
        <end position="191"/>
    </location>
</feature>
<feature type="region of interest" description="Disordered" evidence="3">
    <location>
        <begin position="104"/>
        <end position="191"/>
    </location>
</feature>
<feature type="coiled-coil region" evidence="2">
    <location>
        <begin position="11"/>
        <end position="47"/>
    </location>
</feature>
<feature type="compositionally biased region" description="Polar residues" evidence="3">
    <location>
        <begin position="119"/>
        <end position="128"/>
    </location>
</feature>
<feature type="compositionally biased region" description="Acidic residues" evidence="3">
    <location>
        <begin position="135"/>
        <end position="144"/>
    </location>
</feature>
<feature type="compositionally biased region" description="Basic residues" evidence="3">
    <location>
        <begin position="165"/>
        <end position="177"/>
    </location>
</feature>
<feature type="compositionally biased region" description="Basic and acidic residues" evidence="3">
    <location>
        <begin position="178"/>
        <end position="191"/>
    </location>
</feature>
<feature type="modified residue" description="N-acetylalanine" evidence="1">
    <location>
        <position position="2"/>
    </location>
</feature>
<feature type="modified residue" description="N6-acetyllysine" evidence="1">
    <location>
        <position position="6"/>
    </location>
</feature>
<feature type="modified residue" description="N6-acetyllysine; alternate" evidence="17">
    <location>
        <position position="69"/>
    </location>
</feature>
<feature type="modified residue" description="N6-acetyllysine" evidence="17">
    <location>
        <position position="74"/>
    </location>
</feature>
<feature type="modified residue" description="Phosphoserine" evidence="16">
    <location>
        <position position="118"/>
    </location>
</feature>
<feature type="modified residue" description="Phosphothreonine" evidence="16">
    <location>
        <position position="120"/>
    </location>
</feature>
<feature type="cross-link" description="Glycyl lysine isopeptide (Lys-Gly) (interchain with G-Cter in SUMO2); alternate" evidence="21">
    <location>
        <position position="69"/>
    </location>
</feature>
<feature type="cross-link" description="Glycyl lysine isopeptide (Lys-Gly) (interchain with G-Cter in SUMO1); alternate" evidence="18">
    <location>
        <position position="113"/>
    </location>
</feature>
<feature type="cross-link" description="Glycyl lysine isopeptide (Lys-Gly) (interchain with G-Cter in SUMO2); alternate" evidence="18 19 20 21">
    <location>
        <position position="113"/>
    </location>
</feature>
<feature type="splice variant" id="VSP_022450" description="In isoform 2." evidence="13">
    <original>RIDLKLNKKPRADY</original>
    <variation>SPSGMFDYDFEYVY</variation>
    <location>
        <begin position="178"/>
        <end position="191"/>
    </location>
</feature>
<feature type="splice variant" id="VSP_022451" description="In isoform 3." evidence="12">
    <original>R</original>
    <variation>SPSGMFDYDFE</variation>
    <location>
        <position position="178"/>
    </location>
</feature>
<feature type="splice variant" id="VSP_047018" description="In isoform 4." evidence="14">
    <original>IDLKLNKKPRADY</original>
    <variation>MNVSPKTGWHQLHL</variation>
    <location>
        <begin position="179"/>
        <end position="191"/>
    </location>
</feature>
<feature type="sequence conflict" description="In Ref. 6; AAO65179." evidence="14" ref="6">
    <original>AM</original>
    <variation>RG</variation>
    <location>
        <begin position="2"/>
        <end position="3"/>
    </location>
</feature>
<feature type="sequence conflict" description="In Ref. 3; AAZ13760." evidence="14" ref="3">
    <original>H</original>
    <variation>P</variation>
    <location>
        <position position="4"/>
    </location>
</feature>
<comment type="function">
    <text evidence="5 7 8 11">Component of the NuA4 histone acetyltransferase complex which is involved in transcriptional activation of select genes principally by acetylation of nucleosomal histone H4 and H2A (PubMed:14966270). This modification may both alter nucleosome - DNA interactions and promote interaction of the modified histones with other proteins which positively regulate transcription (PubMed:14966270). Component of HBO1 complexes, which specifically mediate acetylation of histone H3 at 'Lys-14' (H3K14ac), and have reduced activity toward histone H4 (PubMed:16387653, PubMed:24065767). Component of the MOZ/MORF complex which has a histone H3 acetyltransferase activity (PubMed:18794358).</text>
</comment>
<comment type="subunit">
    <text evidence="4 5 6 7 8 11">Component of the NuA4 histone acetyltransferase complex which contains the catalytic subunit KAT5 and the subunits EP400, TRRAP, BRD8, EPC1, DMAP1, RUVBL1, RUVBL2, ING3, actin, ACTL6A, MORF4L1, MORF4L2, MRGBP, YEATS4, VPS72 and MEAF6 (PubMed:12963728, PubMed:14966270, PubMed:15647280). Component of the HBO1 complex composed of KAT7/HBO1, MEAF6, ING4 or ING5, and one scaffold subunit: complexes containing BRPF scaffold (BRPF1, BRD1/BRPF2 or BRPF3) direct KAT7/HBO1 specificity towards H3K14ac, while complexes containing JADE scaffold (JADE1, JADE2 and JADE3) mediate acetylation of histone H4 (PubMed:16387653, PubMed:24065767). Component of the MOZ/MORF complex composed at least of ING5, KAT6A, KAT6B, MEAF6 and one of BRPF1, BRD1/BRPF2 and BRPF3 (PubMed:18794358).</text>
</comment>
<comment type="interaction">
    <interactant intactId="EBI-399266">
        <id>Q9HAF1</id>
    </interactant>
    <interactant intactId="EBI-358049">
        <id>Q13895</id>
        <label>BYSL</label>
    </interactant>
    <organismsDiffer>false</organismsDiffer>
    <experiments>3</experiments>
</comment>
<comment type="interaction">
    <interactant intactId="EBI-399266">
        <id>Q9HAF1</id>
    </interactant>
    <interactant intactId="EBI-739879">
        <id>Q53TS8</id>
        <label>C2CD6</label>
    </interactant>
    <organismsDiffer>false</organismsDiffer>
    <experiments>3</experiments>
</comment>
<comment type="interaction">
    <interactant intactId="EBI-399266">
        <id>Q9HAF1</id>
    </interactant>
    <interactant intactId="EBI-21603100">
        <id>P26378-2</id>
        <label>ELAVL4</label>
    </interactant>
    <organismsDiffer>false</organismsDiffer>
    <experiments>3</experiments>
</comment>
<comment type="interaction">
    <interactant intactId="EBI-399266">
        <id>Q9HAF1</id>
    </interactant>
    <interactant intactId="EBI-348399">
        <id>P22607</id>
        <label>FGFR3</label>
    </interactant>
    <organismsDiffer>false</organismsDiffer>
    <experiments>3</experiments>
</comment>
<comment type="interaction">
    <interactant intactId="EBI-399266">
        <id>Q9HAF1</id>
    </interactant>
    <interactant intactId="EBI-740459">
        <id>P51116</id>
        <label>FXR2</label>
    </interactant>
    <organismsDiffer>false</organismsDiffer>
    <experiments>3</experiments>
</comment>
<comment type="interaction">
    <interactant intactId="EBI-399266">
        <id>Q9HAF1</id>
    </interactant>
    <interactant intactId="EBI-466029">
        <id>P42858</id>
        <label>HTT</label>
    </interactant>
    <organismsDiffer>false</organismsDiffer>
    <experiments>6</experiments>
</comment>
<comment type="interaction">
    <interactant intactId="EBI-399266">
        <id>Q9HAF1</id>
    </interactant>
    <interactant intactId="EBI-12094820">
        <id>A0A0C4DFT8</id>
        <label>JADE2</label>
    </interactant>
    <organismsDiffer>false</organismsDiffer>
    <experiments>3</experiments>
</comment>
<comment type="interaction">
    <interactant intactId="EBI-399266">
        <id>Q9HAF1</id>
    </interactant>
    <interactant intactId="EBI-739909">
        <id>Q969R5</id>
        <label>L3MBTL2</label>
    </interactant>
    <organismsDiffer>false</organismsDiffer>
    <experiments>5</experiments>
</comment>
<comment type="interaction">
    <interactant intactId="EBI-399266">
        <id>Q9HAF1</id>
    </interactant>
    <interactant intactId="EBI-740738">
        <id>O95751</id>
        <label>LDOC1</label>
    </interactant>
    <organismsDiffer>false</organismsDiffer>
    <experiments>3</experiments>
</comment>
<comment type="interaction">
    <interactant intactId="EBI-399266">
        <id>Q9HAF1</id>
    </interactant>
    <interactant intactId="EBI-742388">
        <id>Q9H8W4</id>
        <label>PLEKHF2</label>
    </interactant>
    <organismsDiffer>false</organismsDiffer>
    <experiments>5</experiments>
</comment>
<comment type="interaction">
    <interactant intactId="EBI-399266">
        <id>Q9HAF1</id>
    </interactant>
    <interactant intactId="EBI-712376">
        <id>P40937</id>
        <label>RFC5</label>
    </interactant>
    <organismsDiffer>false</organismsDiffer>
    <experiments>3</experiments>
</comment>
<comment type="interaction">
    <interactant intactId="EBI-399266">
        <id>Q9HAF1</id>
    </interactant>
    <interactant intactId="EBI-2130429">
        <id>Q9BYV2</id>
        <label>TRIM54</label>
    </interactant>
    <organismsDiffer>false</organismsDiffer>
    <experiments>3</experiments>
</comment>
<comment type="subcellular location">
    <subcellularLocation>
        <location evidence="8">Nucleus</location>
        <location evidence="8">Nucleolus</location>
    </subcellularLocation>
    <subcellularLocation>
        <location evidence="9">Chromosome</location>
        <location evidence="9">Centromere</location>
        <location evidence="9">Kinetochore</location>
    </subcellularLocation>
</comment>
<comment type="alternative products">
    <event type="alternative splicing"/>
    <isoform>
        <id>Q9HAF1-1</id>
        <name>1</name>
        <sequence type="displayed"/>
    </isoform>
    <isoform>
        <id>Q9HAF1-2</id>
        <name>2</name>
        <sequence type="described" ref="VSP_022450"/>
    </isoform>
    <isoform>
        <id>Q9HAF1-3</id>
        <name>3</name>
        <sequence type="described" ref="VSP_022451"/>
    </isoform>
    <isoform>
        <id>Q9HAF1-4</id>
        <name>4</name>
        <sequence type="described" ref="VSP_047018"/>
    </isoform>
</comment>
<comment type="disease">
    <text evidence="10">A chromosomal aberration involving MEAF6 may be a cause of endometrial stromal tumors. Translocation t(1;6)(p34;p21) with PHF1.</text>
</comment>
<comment type="similarity">
    <text evidence="14">Belongs to the EAF6 family.</text>
</comment>
<keyword id="KW-0007">Acetylation</keyword>
<keyword id="KW-0010">Activator</keyword>
<keyword id="KW-0025">Alternative splicing</keyword>
<keyword id="KW-0137">Centromere</keyword>
<keyword id="KW-0156">Chromatin regulator</keyword>
<keyword id="KW-0160">Chromosomal rearrangement</keyword>
<keyword id="KW-0158">Chromosome</keyword>
<keyword id="KW-0175">Coiled coil</keyword>
<keyword id="KW-1017">Isopeptide bond</keyword>
<keyword id="KW-0995">Kinetochore</keyword>
<keyword id="KW-0539">Nucleus</keyword>
<keyword id="KW-0597">Phosphoprotein</keyword>
<keyword id="KW-1267">Proteomics identification</keyword>
<keyword id="KW-1185">Reference proteome</keyword>
<keyword id="KW-0804">Transcription</keyword>
<keyword id="KW-0805">Transcription regulation</keyword>
<keyword id="KW-0832">Ubl conjugation</keyword>
<reference key="1">
    <citation type="journal article" date="2007" name="BMC Genomics">
        <title>The full-ORF clone resource of the German cDNA consortium.</title>
        <authorList>
            <person name="Bechtel S."/>
            <person name="Rosenfelder H."/>
            <person name="Duda A."/>
            <person name="Schmidt C.P."/>
            <person name="Ernst U."/>
            <person name="Wellenreuther R."/>
            <person name="Mehrle A."/>
            <person name="Schuster C."/>
            <person name="Bahr A."/>
            <person name="Bloecker H."/>
            <person name="Heubner D."/>
            <person name="Hoerlein A."/>
            <person name="Michel G."/>
            <person name="Wedler H."/>
            <person name="Koehrer K."/>
            <person name="Ottenwaelder B."/>
            <person name="Poustka A."/>
            <person name="Wiemann S."/>
            <person name="Schupp I."/>
        </authorList>
    </citation>
    <scope>NUCLEOTIDE SEQUENCE [LARGE SCALE MRNA] (ISOFORM 3)</scope>
    <source>
        <tissue>Cerebellum</tissue>
        <tissue>Fetal brain</tissue>
    </source>
</reference>
<reference key="2">
    <citation type="journal article" date="2004" name="Nat. Genet.">
        <title>Complete sequencing and characterization of 21,243 full-length human cDNAs.</title>
        <authorList>
            <person name="Ota T."/>
            <person name="Suzuki Y."/>
            <person name="Nishikawa T."/>
            <person name="Otsuki T."/>
            <person name="Sugiyama T."/>
            <person name="Irie R."/>
            <person name="Wakamatsu A."/>
            <person name="Hayashi K."/>
            <person name="Sato H."/>
            <person name="Nagai K."/>
            <person name="Kimura K."/>
            <person name="Makita H."/>
            <person name="Sekine M."/>
            <person name="Obayashi M."/>
            <person name="Nishi T."/>
            <person name="Shibahara T."/>
            <person name="Tanaka T."/>
            <person name="Ishii S."/>
            <person name="Yamamoto J."/>
            <person name="Saito K."/>
            <person name="Kawai Y."/>
            <person name="Isono Y."/>
            <person name="Nakamura Y."/>
            <person name="Nagahari K."/>
            <person name="Murakami K."/>
            <person name="Yasuda T."/>
            <person name="Iwayanagi T."/>
            <person name="Wagatsuma M."/>
            <person name="Shiratori A."/>
            <person name="Sudo H."/>
            <person name="Hosoiri T."/>
            <person name="Kaku Y."/>
            <person name="Kodaira H."/>
            <person name="Kondo H."/>
            <person name="Sugawara M."/>
            <person name="Takahashi M."/>
            <person name="Kanda K."/>
            <person name="Yokoi T."/>
            <person name="Furuya T."/>
            <person name="Kikkawa E."/>
            <person name="Omura Y."/>
            <person name="Abe K."/>
            <person name="Kamihara K."/>
            <person name="Katsuta N."/>
            <person name="Sato K."/>
            <person name="Tanikawa M."/>
            <person name="Yamazaki M."/>
            <person name="Ninomiya K."/>
            <person name="Ishibashi T."/>
            <person name="Yamashita H."/>
            <person name="Murakawa K."/>
            <person name="Fujimori K."/>
            <person name="Tanai H."/>
            <person name="Kimata M."/>
            <person name="Watanabe M."/>
            <person name="Hiraoka S."/>
            <person name="Chiba Y."/>
            <person name="Ishida S."/>
            <person name="Ono Y."/>
            <person name="Takiguchi S."/>
            <person name="Watanabe S."/>
            <person name="Yosida M."/>
            <person name="Hotuta T."/>
            <person name="Kusano J."/>
            <person name="Kanehori K."/>
            <person name="Takahashi-Fujii A."/>
            <person name="Hara H."/>
            <person name="Tanase T.-O."/>
            <person name="Nomura Y."/>
            <person name="Togiya S."/>
            <person name="Komai F."/>
            <person name="Hara R."/>
            <person name="Takeuchi K."/>
            <person name="Arita M."/>
            <person name="Imose N."/>
            <person name="Musashino K."/>
            <person name="Yuuki H."/>
            <person name="Oshima A."/>
            <person name="Sasaki N."/>
            <person name="Aotsuka S."/>
            <person name="Yoshikawa Y."/>
            <person name="Matsunawa H."/>
            <person name="Ichihara T."/>
            <person name="Shiohata N."/>
            <person name="Sano S."/>
            <person name="Moriya S."/>
            <person name="Momiyama H."/>
            <person name="Satoh N."/>
            <person name="Takami S."/>
            <person name="Terashima Y."/>
            <person name="Suzuki O."/>
            <person name="Nakagawa S."/>
            <person name="Senoh A."/>
            <person name="Mizoguchi H."/>
            <person name="Goto Y."/>
            <person name="Shimizu F."/>
            <person name="Wakebe H."/>
            <person name="Hishigaki H."/>
            <person name="Watanabe T."/>
            <person name="Sugiyama A."/>
            <person name="Takemoto M."/>
            <person name="Kawakami B."/>
            <person name="Yamazaki M."/>
            <person name="Watanabe K."/>
            <person name="Kumagai A."/>
            <person name="Itakura S."/>
            <person name="Fukuzumi Y."/>
            <person name="Fujimori Y."/>
            <person name="Komiyama M."/>
            <person name="Tashiro H."/>
            <person name="Tanigami A."/>
            <person name="Fujiwara T."/>
            <person name="Ono T."/>
            <person name="Yamada K."/>
            <person name="Fujii Y."/>
            <person name="Ozaki K."/>
            <person name="Hirao M."/>
            <person name="Ohmori Y."/>
            <person name="Kawabata A."/>
            <person name="Hikiji T."/>
            <person name="Kobatake N."/>
            <person name="Inagaki H."/>
            <person name="Ikema Y."/>
            <person name="Okamoto S."/>
            <person name="Okitani R."/>
            <person name="Kawakami T."/>
            <person name="Noguchi S."/>
            <person name="Itoh T."/>
            <person name="Shigeta K."/>
            <person name="Senba T."/>
            <person name="Matsumura K."/>
            <person name="Nakajima Y."/>
            <person name="Mizuno T."/>
            <person name="Morinaga M."/>
            <person name="Sasaki M."/>
            <person name="Togashi T."/>
            <person name="Oyama M."/>
            <person name="Hata H."/>
            <person name="Watanabe M."/>
            <person name="Komatsu T."/>
            <person name="Mizushima-Sugano J."/>
            <person name="Satoh T."/>
            <person name="Shirai Y."/>
            <person name="Takahashi Y."/>
            <person name="Nakagawa K."/>
            <person name="Okumura K."/>
            <person name="Nagase T."/>
            <person name="Nomura N."/>
            <person name="Kikuchi H."/>
            <person name="Masuho Y."/>
            <person name="Yamashita R."/>
            <person name="Nakai K."/>
            <person name="Yada T."/>
            <person name="Nakamura Y."/>
            <person name="Ohara O."/>
            <person name="Isogai T."/>
            <person name="Sugano S."/>
        </authorList>
    </citation>
    <scope>NUCLEOTIDE SEQUENCE [LARGE SCALE MRNA] (ISOFORM 1)</scope>
    <source>
        <tissue>Embryo</tissue>
    </source>
</reference>
<reference key="3">
    <citation type="submission" date="2005-06" db="EMBL/GenBank/DDBJ databases">
        <authorList>
            <person name="Lin L."/>
            <person name="Nong W."/>
            <person name="Zhou G."/>
            <person name="Ke R."/>
            <person name="Shen C."/>
            <person name="Zhong G."/>
            <person name="Zheng Z."/>
            <person name="Liang M."/>
            <person name="Li M."/>
            <person name="Li H."/>
            <person name="Yang S."/>
        </authorList>
    </citation>
    <scope>NUCLEOTIDE SEQUENCE [LARGE SCALE MRNA] (ISOFORM 2)</scope>
</reference>
<reference key="4">
    <citation type="journal article" date="2006" name="Nature">
        <title>The DNA sequence and biological annotation of human chromosome 1.</title>
        <authorList>
            <person name="Gregory S.G."/>
            <person name="Barlow K.F."/>
            <person name="McLay K.E."/>
            <person name="Kaul R."/>
            <person name="Swarbreck D."/>
            <person name="Dunham A."/>
            <person name="Scott C.E."/>
            <person name="Howe K.L."/>
            <person name="Woodfine K."/>
            <person name="Spencer C.C.A."/>
            <person name="Jones M.C."/>
            <person name="Gillson C."/>
            <person name="Searle S."/>
            <person name="Zhou Y."/>
            <person name="Kokocinski F."/>
            <person name="McDonald L."/>
            <person name="Evans R."/>
            <person name="Phillips K."/>
            <person name="Atkinson A."/>
            <person name="Cooper R."/>
            <person name="Jones C."/>
            <person name="Hall R.E."/>
            <person name="Andrews T.D."/>
            <person name="Lloyd C."/>
            <person name="Ainscough R."/>
            <person name="Almeida J.P."/>
            <person name="Ambrose K.D."/>
            <person name="Anderson F."/>
            <person name="Andrew R.W."/>
            <person name="Ashwell R.I.S."/>
            <person name="Aubin K."/>
            <person name="Babbage A.K."/>
            <person name="Bagguley C.L."/>
            <person name="Bailey J."/>
            <person name="Beasley H."/>
            <person name="Bethel G."/>
            <person name="Bird C.P."/>
            <person name="Bray-Allen S."/>
            <person name="Brown J.Y."/>
            <person name="Brown A.J."/>
            <person name="Buckley D."/>
            <person name="Burton J."/>
            <person name="Bye J."/>
            <person name="Carder C."/>
            <person name="Chapman J.C."/>
            <person name="Clark S.Y."/>
            <person name="Clarke G."/>
            <person name="Clee C."/>
            <person name="Cobley V."/>
            <person name="Collier R.E."/>
            <person name="Corby N."/>
            <person name="Coville G.J."/>
            <person name="Davies J."/>
            <person name="Deadman R."/>
            <person name="Dunn M."/>
            <person name="Earthrowl M."/>
            <person name="Ellington A.G."/>
            <person name="Errington H."/>
            <person name="Frankish A."/>
            <person name="Frankland J."/>
            <person name="French L."/>
            <person name="Garner P."/>
            <person name="Garnett J."/>
            <person name="Gay L."/>
            <person name="Ghori M.R.J."/>
            <person name="Gibson R."/>
            <person name="Gilby L.M."/>
            <person name="Gillett W."/>
            <person name="Glithero R.J."/>
            <person name="Grafham D.V."/>
            <person name="Griffiths C."/>
            <person name="Griffiths-Jones S."/>
            <person name="Grocock R."/>
            <person name="Hammond S."/>
            <person name="Harrison E.S.I."/>
            <person name="Hart E."/>
            <person name="Haugen E."/>
            <person name="Heath P.D."/>
            <person name="Holmes S."/>
            <person name="Holt K."/>
            <person name="Howden P.J."/>
            <person name="Hunt A.R."/>
            <person name="Hunt S.E."/>
            <person name="Hunter G."/>
            <person name="Isherwood J."/>
            <person name="James R."/>
            <person name="Johnson C."/>
            <person name="Johnson D."/>
            <person name="Joy A."/>
            <person name="Kay M."/>
            <person name="Kershaw J.K."/>
            <person name="Kibukawa M."/>
            <person name="Kimberley A.M."/>
            <person name="King A."/>
            <person name="Knights A.J."/>
            <person name="Lad H."/>
            <person name="Laird G."/>
            <person name="Lawlor S."/>
            <person name="Leongamornlert D.A."/>
            <person name="Lloyd D.M."/>
            <person name="Loveland J."/>
            <person name="Lovell J."/>
            <person name="Lush M.J."/>
            <person name="Lyne R."/>
            <person name="Martin S."/>
            <person name="Mashreghi-Mohammadi M."/>
            <person name="Matthews L."/>
            <person name="Matthews N.S.W."/>
            <person name="McLaren S."/>
            <person name="Milne S."/>
            <person name="Mistry S."/>
            <person name="Moore M.J.F."/>
            <person name="Nickerson T."/>
            <person name="O'Dell C.N."/>
            <person name="Oliver K."/>
            <person name="Palmeiri A."/>
            <person name="Palmer S.A."/>
            <person name="Parker A."/>
            <person name="Patel D."/>
            <person name="Pearce A.V."/>
            <person name="Peck A.I."/>
            <person name="Pelan S."/>
            <person name="Phelps K."/>
            <person name="Phillimore B.J."/>
            <person name="Plumb R."/>
            <person name="Rajan J."/>
            <person name="Raymond C."/>
            <person name="Rouse G."/>
            <person name="Saenphimmachak C."/>
            <person name="Sehra H.K."/>
            <person name="Sheridan E."/>
            <person name="Shownkeen R."/>
            <person name="Sims S."/>
            <person name="Skuce C.D."/>
            <person name="Smith M."/>
            <person name="Steward C."/>
            <person name="Subramanian S."/>
            <person name="Sycamore N."/>
            <person name="Tracey A."/>
            <person name="Tromans A."/>
            <person name="Van Helmond Z."/>
            <person name="Wall M."/>
            <person name="Wallis J.M."/>
            <person name="White S."/>
            <person name="Whitehead S.L."/>
            <person name="Wilkinson J.E."/>
            <person name="Willey D.L."/>
            <person name="Williams H."/>
            <person name="Wilming L."/>
            <person name="Wray P.W."/>
            <person name="Wu Z."/>
            <person name="Coulson A."/>
            <person name="Vaudin M."/>
            <person name="Sulston J.E."/>
            <person name="Durbin R.M."/>
            <person name="Hubbard T."/>
            <person name="Wooster R."/>
            <person name="Dunham I."/>
            <person name="Carter N.P."/>
            <person name="McVean G."/>
            <person name="Ross M.T."/>
            <person name="Harrow J."/>
            <person name="Olson M.V."/>
            <person name="Beck S."/>
            <person name="Rogers J."/>
            <person name="Bentley D.R."/>
        </authorList>
    </citation>
    <scope>NUCLEOTIDE SEQUENCE [LARGE SCALE GENOMIC DNA]</scope>
</reference>
<reference key="5">
    <citation type="journal article" date="2004" name="Genome Res.">
        <title>The status, quality, and expansion of the NIH full-length cDNA project: the Mammalian Gene Collection (MGC).</title>
        <authorList>
            <consortium name="The MGC Project Team"/>
        </authorList>
    </citation>
    <scope>NUCLEOTIDE SEQUENCE [LARGE SCALE MRNA] (ISOFORM 1)</scope>
    <source>
        <tissue>Brain</tissue>
        <tissue>Uterus</tissue>
    </source>
</reference>
<reference key="6">
    <citation type="journal article" date="2003" name="Proc. Natl. Acad. Sci. U.S.A.">
        <title>Immunomic analysis of human sarcoma.</title>
        <authorList>
            <person name="Lee S.-Y."/>
            <person name="Obata Y."/>
            <person name="Yoshida M."/>
            <person name="Stockert E."/>
            <person name="Williamson B."/>
            <person name="Jungbluth A.A."/>
            <person name="Chen Y.-T."/>
            <person name="Old L.J."/>
            <person name="Scanlan M.J."/>
        </authorList>
    </citation>
    <scope>NUCLEOTIDE SEQUENCE [MRNA] OF 2-191 (ISOFORM 1)</scope>
</reference>
<reference key="7">
    <citation type="journal article" date="2003" name="J. Biol. Chem.">
        <title>Identification of new subunits of the multiprotein mammalian TRRAP/TIP60-containing histone acetyltransferase complex.</title>
        <authorList>
            <person name="Cai Y."/>
            <person name="Jin J."/>
            <person name="Tomomori-Sato C."/>
            <person name="Sato S."/>
            <person name="Sorokina I."/>
            <person name="Parmely T.J."/>
            <person name="Conaway R.C."/>
            <person name="Conaway J.W."/>
        </authorList>
    </citation>
    <scope>IDENTIFICATION BY MASS SPECTROMETRY</scope>
    <scope>IDENTIFICATION IN THE NUA4 HISTONE ACETYLTRANSFERASE COMPLEX</scope>
</reference>
<reference key="8">
    <citation type="journal article" date="2004" name="Mol. Cell. Biol.">
        <title>Structural and functional conservation of the NuA4 histone acetyltransferase complex from yeast to humans.</title>
        <authorList>
            <person name="Doyon Y."/>
            <person name="Selleck W."/>
            <person name="Lane W.S."/>
            <person name="Tan S."/>
            <person name="Cote J."/>
        </authorList>
    </citation>
    <scope>FUNCTION</scope>
    <scope>IDENTIFICATION BY MASS SPECTROMETRY</scope>
    <scope>IDENTIFICATION IN THE NUA4 HISTONE ACETYLTRANSFERASE COMPLEX</scope>
</reference>
<reference key="9">
    <citation type="journal article" date="2005" name="J. Biol. Chem.">
        <title>The mammalian YL1 protein is a shared subunit of the TRRAP/TIP60 histone acetyltransferase and SRCAP complexes.</title>
        <authorList>
            <person name="Cai Y."/>
            <person name="Jin J."/>
            <person name="Florens L."/>
            <person name="Swanson S.K."/>
            <person name="Kusch T."/>
            <person name="Li B."/>
            <person name="Workman J.L."/>
            <person name="Washburn M.P."/>
            <person name="Conaway R.C."/>
            <person name="Conaway J.W."/>
        </authorList>
    </citation>
    <scope>IDENTIFICATION BY MASS SPECTROMETRY</scope>
    <scope>IDENTIFICATION IN THE NUA4 HISTONE ACETYLTRANSFERASE COMPLEX</scope>
</reference>
<reference key="10">
    <citation type="journal article" date="2006" name="Mol. Cell">
        <title>ING tumor suppressor proteins are critical regulators of chromatin acetylation required for genome expression and perpetuation.</title>
        <authorList>
            <person name="Doyon Y."/>
            <person name="Cayrou C."/>
            <person name="Ullah M."/>
            <person name="Landry A.-J."/>
            <person name="Cote V."/>
            <person name="Selleck W."/>
            <person name="Lane W.S."/>
            <person name="Tan S."/>
            <person name="Yang X.-J."/>
            <person name="Cote J."/>
        </authorList>
    </citation>
    <scope>FUNCTION</scope>
    <scope>IDENTIFICATION BY MASS SPECTROMETRY</scope>
    <scope>IDENTIFICATION IN THE NUA4 HISTONE ACETYLTRANSFERASE COMPLEX</scope>
    <scope>IDENTIFICATION IN THE HBO1 COMPLEX</scope>
    <scope>IDENTIFICATION IN THE MOZ/MORF COMPLEX</scope>
</reference>
<reference key="11">
    <citation type="journal article" date="2007" name="Science">
        <title>ATM and ATR substrate analysis reveals extensive protein networks responsive to DNA damage.</title>
        <authorList>
            <person name="Matsuoka S."/>
            <person name="Ballif B.A."/>
            <person name="Smogorzewska A."/>
            <person name="McDonald E.R. III"/>
            <person name="Hurov K.E."/>
            <person name="Luo J."/>
            <person name="Bakalarski C.E."/>
            <person name="Zhao Z."/>
            <person name="Solimini N."/>
            <person name="Lerenthal Y."/>
            <person name="Shiloh Y."/>
            <person name="Gygi S.P."/>
            <person name="Elledge S.J."/>
        </authorList>
    </citation>
    <scope>IDENTIFICATION BY MASS SPECTROMETRY [LARGE SCALE ANALYSIS]</scope>
    <source>
        <tissue>Embryonic kidney</tissue>
    </source>
</reference>
<reference key="12">
    <citation type="journal article" date="2008" name="Mol. Cell. Biol.">
        <title>Molecular architecture of quartet MOZ/MORF histone acetyltransferase complexes.</title>
        <authorList>
            <person name="Ullah M."/>
            <person name="Pelletier N."/>
            <person name="Xiao L."/>
            <person name="Zhao S.P."/>
            <person name="Wang K."/>
            <person name="Degerny C."/>
            <person name="Tahmasebi S."/>
            <person name="Cayrou C."/>
            <person name="Doyon Y."/>
            <person name="Goh S.-L."/>
            <person name="Champagne N."/>
            <person name="Cote J."/>
            <person name="Yang X.-J."/>
        </authorList>
    </citation>
    <scope>FUNCTION</scope>
    <scope>IDENTIFICATION IN THE MOZ/MORF COMPLEX</scope>
    <scope>INTERACTION WITH BRPF1</scope>
    <scope>SUBCELLULAR LOCATION</scope>
</reference>
<reference key="13">
    <citation type="journal article" date="2008" name="Proc. Natl. Acad. Sci. U.S.A.">
        <title>A quantitative atlas of mitotic phosphorylation.</title>
        <authorList>
            <person name="Dephoure N."/>
            <person name="Zhou C."/>
            <person name="Villen J."/>
            <person name="Beausoleil S.A."/>
            <person name="Bakalarski C.E."/>
            <person name="Elledge S.J."/>
            <person name="Gygi S.P."/>
        </authorList>
    </citation>
    <scope>PHOSPHORYLATION [LARGE SCALE ANALYSIS] AT SER-118 AND THR-120</scope>
    <scope>IDENTIFICATION BY MASS SPECTROMETRY [LARGE SCALE ANALYSIS]</scope>
    <source>
        <tissue>Cervix carcinoma</tissue>
    </source>
</reference>
<reference key="14">
    <citation type="journal article" date="2009" name="Science">
        <title>Lysine acetylation targets protein complexes and co-regulates major cellular functions.</title>
        <authorList>
            <person name="Choudhary C."/>
            <person name="Kumar C."/>
            <person name="Gnad F."/>
            <person name="Nielsen M.L."/>
            <person name="Rehman M."/>
            <person name="Walther T.C."/>
            <person name="Olsen J.V."/>
            <person name="Mann M."/>
        </authorList>
    </citation>
    <scope>ACETYLATION [LARGE SCALE ANALYSIS] AT LYS-69 AND LYS-74</scope>
    <scope>IDENTIFICATION BY MASS SPECTROMETRY [LARGE SCALE ANALYSIS]</scope>
</reference>
<reference key="15">
    <citation type="journal article" date="2010" name="Cell">
        <title>The protein composition of mitotic chromosomes determined using multiclassifier combinatorial proteomics.</title>
        <authorList>
            <person name="Ohta S."/>
            <person name="Bukowski-Wills J.C."/>
            <person name="Sanchez-Pulido L."/>
            <person name="Alves Fde L."/>
            <person name="Wood L."/>
            <person name="Chen Z.A."/>
            <person name="Platani M."/>
            <person name="Fischer L."/>
            <person name="Hudson D.F."/>
            <person name="Ponting C.P."/>
            <person name="Fukagawa T."/>
            <person name="Earnshaw W.C."/>
            <person name="Rappsilber J."/>
        </authorList>
    </citation>
    <scope>SUBCELLULAR LOCATION</scope>
</reference>
<reference key="16">
    <citation type="journal article" date="2010" name="Sci. Signal.">
        <title>Quantitative phosphoproteomics reveals widespread full phosphorylation site occupancy during mitosis.</title>
        <authorList>
            <person name="Olsen J.V."/>
            <person name="Vermeulen M."/>
            <person name="Santamaria A."/>
            <person name="Kumar C."/>
            <person name="Miller M.L."/>
            <person name="Jensen L.J."/>
            <person name="Gnad F."/>
            <person name="Cox J."/>
            <person name="Jensen T.S."/>
            <person name="Nigg E.A."/>
            <person name="Brunak S."/>
            <person name="Mann M."/>
        </authorList>
    </citation>
    <scope>IDENTIFICATION BY MASS SPECTROMETRY [LARGE SCALE ANALYSIS]</scope>
    <source>
        <tissue>Cervix carcinoma</tissue>
    </source>
</reference>
<reference key="17">
    <citation type="journal article" date="2011" name="Sci. Signal.">
        <title>System-wide temporal characterization of the proteome and phosphoproteome of human embryonic stem cell differentiation.</title>
        <authorList>
            <person name="Rigbolt K.T."/>
            <person name="Prokhorova T.A."/>
            <person name="Akimov V."/>
            <person name="Henningsen J."/>
            <person name="Johansen P.T."/>
            <person name="Kratchmarova I."/>
            <person name="Kassem M."/>
            <person name="Mann M."/>
            <person name="Olsen J.V."/>
            <person name="Blagoev B."/>
        </authorList>
    </citation>
    <scope>IDENTIFICATION BY MASS SPECTROMETRY [LARGE SCALE ANALYSIS]</scope>
</reference>
<reference key="18">
    <citation type="journal article" date="2012" name="PLoS ONE">
        <title>Novel fusion of MYST/Esa1-associated factor 6 and PHF1 in endometrial stromal sarcoma.</title>
        <authorList>
            <person name="Panagopoulos I."/>
            <person name="Micci F."/>
            <person name="Thorsen J."/>
            <person name="Gorunova L."/>
            <person name="Eibak A.M."/>
            <person name="Bjerkehagen B."/>
            <person name="Davidson B."/>
            <person name="Heim S."/>
        </authorList>
    </citation>
    <scope>DISEASE</scope>
    <scope>CHROMOSOMAL TRANSLOCATION WITH PHF1</scope>
</reference>
<reference key="19">
    <citation type="journal article" date="2013" name="Genes Dev.">
        <title>Exchange of associated factors directs a switch in HBO1 acetyltransferase histone tail specificity.</title>
        <authorList>
            <person name="Lalonde M.E."/>
            <person name="Avvakumov N."/>
            <person name="Glass K.C."/>
            <person name="Joncas F.H."/>
            <person name="Saksouk N."/>
            <person name="Holliday M."/>
            <person name="Paquet E."/>
            <person name="Yan K."/>
            <person name="Tong Q."/>
            <person name="Klein B.J."/>
            <person name="Tan S."/>
            <person name="Yang X.J."/>
            <person name="Kutateladze T.G."/>
            <person name="Cote J."/>
        </authorList>
    </citation>
    <scope>FUNCTION</scope>
    <scope>IDENTIFICATION IN THE HBO1 COMPLEX</scope>
</reference>
<reference key="20">
    <citation type="journal article" date="2013" name="J. Proteome Res.">
        <title>Toward a comprehensive characterization of a human cancer cell phosphoproteome.</title>
        <authorList>
            <person name="Zhou H."/>
            <person name="Di Palma S."/>
            <person name="Preisinger C."/>
            <person name="Peng M."/>
            <person name="Polat A.N."/>
            <person name="Heck A.J."/>
            <person name="Mohammed S."/>
        </authorList>
    </citation>
    <scope>IDENTIFICATION BY MASS SPECTROMETRY [LARGE SCALE ANALYSIS]</scope>
    <source>
        <tissue>Erythroleukemia</tissue>
    </source>
</reference>
<reference key="21">
    <citation type="journal article" date="2014" name="Nat. Struct. Mol. Biol.">
        <title>Uncovering global SUMOylation signaling networks in a site-specific manner.</title>
        <authorList>
            <person name="Hendriks I.A."/>
            <person name="D'Souza R.C."/>
            <person name="Yang B."/>
            <person name="Verlaan-de Vries M."/>
            <person name="Mann M."/>
            <person name="Vertegaal A.C."/>
        </authorList>
    </citation>
    <scope>SUMOYLATION [LARGE SCALE ANALYSIS] AT LYS-113</scope>
    <scope>IDENTIFICATION BY MASS SPECTROMETRY [LARGE SCALE ANALYSIS]</scope>
</reference>
<reference key="22">
    <citation type="journal article" date="2014" name="Proc. Natl. Acad. Sci. U.S.A.">
        <title>Mapping of SUMO sites and analysis of SUMOylation changes induced by external stimuli.</title>
        <authorList>
            <person name="Impens F."/>
            <person name="Radoshevich L."/>
            <person name="Cossart P."/>
            <person name="Ribet D."/>
        </authorList>
    </citation>
    <scope>SUMOYLATION [LARGE SCALE ANALYSIS] AT LYS-113</scope>
    <scope>IDENTIFICATION BY MASS SPECTROMETRY [LARGE SCALE ANALYSIS]</scope>
</reference>
<reference key="23">
    <citation type="journal article" date="2015" name="Mol. Cell. Proteomics">
        <title>System-wide analysis of SUMOylation dynamics in response to replication stress reveals novel small ubiquitin-like modified target proteins and acceptor lysines relevant for genome stability.</title>
        <authorList>
            <person name="Xiao Z."/>
            <person name="Chang J.G."/>
            <person name="Hendriks I.A."/>
            <person name="Sigurdsson J.O."/>
            <person name="Olsen J.V."/>
            <person name="Vertegaal A.C."/>
        </authorList>
    </citation>
    <scope>SUMOYLATION [LARGE SCALE ANALYSIS] AT LYS-113</scope>
    <scope>IDENTIFICATION BY MASS SPECTROMETRY [LARGE SCALE ANALYSIS]</scope>
</reference>
<reference key="24">
    <citation type="journal article" date="2017" name="Nat. Struct. Mol. Biol.">
        <title>Site-specific mapping of the human SUMO proteome reveals co-modification with phosphorylation.</title>
        <authorList>
            <person name="Hendriks I.A."/>
            <person name="Lyon D."/>
            <person name="Young C."/>
            <person name="Jensen L.J."/>
            <person name="Vertegaal A.C."/>
            <person name="Nielsen M.L."/>
        </authorList>
    </citation>
    <scope>SUMOYLATION [LARGE SCALE ANALYSIS] AT LYS-69 AND LYS-113</scope>
    <scope>IDENTIFICATION BY MASS SPECTROMETRY [LARGE SCALE ANALYSIS]</scope>
</reference>